<comment type="induction">
    <text>By auxin.</text>
</comment>
<comment type="similarity">
    <text evidence="1">Belongs to the ARG7 family.</text>
</comment>
<reference key="1">
    <citation type="journal article" date="1989" name="Plant Cell">
        <title>Transcription, organization, and sequence of an auxin-regulated gene cluster in soybean.</title>
        <authorList>
            <person name="McClure B.A."/>
            <person name="Hagen G."/>
            <person name="Brown C.S."/>
            <person name="Gee M.A."/>
            <person name="Guilfoyle T.J."/>
        </authorList>
    </citation>
    <scope>NUCLEOTIDE SEQUENCE [GENOMIC DNA]</scope>
    <source>
        <strain>cv. Wayne</strain>
    </source>
</reference>
<feature type="chain" id="PRO_0000064402" description="Auxin-induced protein 10A5">
    <location>
        <begin position="1"/>
        <end position="93"/>
    </location>
</feature>
<sequence length="93" mass="10535">MGFRIAGIVRRTSFYTTQAASKRVDVPKGYAAVYVGDKMRRFTIPVSYLNEPSFQELLSQAEEEFGYDHPMGGLTIPCKEEEFLNVTAHLNEL</sequence>
<organism>
    <name type="scientific">Glycine max</name>
    <name type="common">Soybean</name>
    <name type="synonym">Glycine hispida</name>
    <dbReference type="NCBI Taxonomy" id="3847"/>
    <lineage>
        <taxon>Eukaryota</taxon>
        <taxon>Viridiplantae</taxon>
        <taxon>Streptophyta</taxon>
        <taxon>Embryophyta</taxon>
        <taxon>Tracheophyta</taxon>
        <taxon>Spermatophyta</taxon>
        <taxon>Magnoliopsida</taxon>
        <taxon>eudicotyledons</taxon>
        <taxon>Gunneridae</taxon>
        <taxon>Pentapetalae</taxon>
        <taxon>rosids</taxon>
        <taxon>fabids</taxon>
        <taxon>Fabales</taxon>
        <taxon>Fabaceae</taxon>
        <taxon>Papilionoideae</taxon>
        <taxon>50 kb inversion clade</taxon>
        <taxon>NPAAA clade</taxon>
        <taxon>indigoferoid/millettioid clade</taxon>
        <taxon>Phaseoleae</taxon>
        <taxon>Glycine</taxon>
        <taxon>Glycine subgen. Soja</taxon>
    </lineage>
</organism>
<evidence type="ECO:0000305" key="1"/>
<name>A10A5_SOYBN</name>
<keyword id="KW-0927">Auxin signaling pathway</keyword>
<keyword id="KW-1185">Reference proteome</keyword>
<accession>P33079</accession>
<dbReference type="EMBL" id="S44177">
    <property type="protein sequence ID" value="AAB23283.1"/>
    <property type="molecule type" value="Genomic_DNA"/>
</dbReference>
<dbReference type="PIR" id="JQ1100">
    <property type="entry name" value="JQ1100"/>
</dbReference>
<dbReference type="RefSeq" id="XP_014628765.1">
    <property type="nucleotide sequence ID" value="XM_014773279.1"/>
</dbReference>
<dbReference type="RefSeq" id="XP_014632271.1">
    <property type="nucleotide sequence ID" value="XM_014776785.2"/>
</dbReference>
<dbReference type="RefSeq" id="XP_014632272.1">
    <property type="nucleotide sequence ID" value="XM_014776786.2"/>
</dbReference>
<dbReference type="RefSeq" id="XP_014632273.1">
    <property type="nucleotide sequence ID" value="XM_014776787.2"/>
</dbReference>
<dbReference type="SMR" id="P33079"/>
<dbReference type="FunCoup" id="P33079">
    <property type="interactions" value="502"/>
</dbReference>
<dbReference type="PaxDb" id="3847-GLYMA0079S00370.1"/>
<dbReference type="EnsemblPlants" id="KRG88476">
    <property type="protein sequence ID" value="KRG88476"/>
    <property type="gene ID" value="GLYMA_U036100"/>
</dbReference>
<dbReference type="EnsemblPlants" id="KRH55782">
    <property type="protein sequence ID" value="KRH55782"/>
    <property type="gene ID" value="GLYMA_06G281200"/>
</dbReference>
<dbReference type="EnsemblPlants" id="KRH55789">
    <property type="protein sequence ID" value="KRH55789"/>
    <property type="gene ID" value="GLYMA_06G281900"/>
</dbReference>
<dbReference type="EnsemblPlants" id="KRH55791">
    <property type="protein sequence ID" value="KRH55791"/>
    <property type="gene ID" value="GLYMA_06G282100"/>
</dbReference>
<dbReference type="GeneID" id="100775873"/>
<dbReference type="GeneID" id="100817568"/>
<dbReference type="GeneID" id="106798973"/>
<dbReference type="Gramene" id="KRG88476">
    <property type="protein sequence ID" value="KRG88476"/>
    <property type="gene ID" value="GLYMA_U036100"/>
</dbReference>
<dbReference type="Gramene" id="KRH55782">
    <property type="protein sequence ID" value="KRH55782"/>
    <property type="gene ID" value="GLYMA_06G281200"/>
</dbReference>
<dbReference type="Gramene" id="KRH55789">
    <property type="protein sequence ID" value="KRH55789"/>
    <property type="gene ID" value="GLYMA_06G281900"/>
</dbReference>
<dbReference type="Gramene" id="KRH55791">
    <property type="protein sequence ID" value="KRH55791"/>
    <property type="gene ID" value="GLYMA_06G282100"/>
</dbReference>
<dbReference type="KEGG" id="gmx:100775873"/>
<dbReference type="KEGG" id="gmx:100817568"/>
<dbReference type="KEGG" id="gmx:106798973"/>
<dbReference type="eggNOG" id="ENOG502S4NX">
    <property type="taxonomic scope" value="Eukaryota"/>
</dbReference>
<dbReference type="HOGENOM" id="CLU_098106_3_1_1"/>
<dbReference type="InParanoid" id="P33079"/>
<dbReference type="OrthoDB" id="625231at2759"/>
<dbReference type="Proteomes" id="UP000008827">
    <property type="component" value="Chromosome 6"/>
</dbReference>
<dbReference type="Proteomes" id="UP000008827">
    <property type="component" value="Unassembled WGS sequence"/>
</dbReference>
<dbReference type="GO" id="GO:0009734">
    <property type="term" value="P:auxin-activated signaling pathway"/>
    <property type="evidence" value="ECO:0007669"/>
    <property type="project" value="UniProtKB-KW"/>
</dbReference>
<dbReference type="InterPro" id="IPR003676">
    <property type="entry name" value="SAUR_fam"/>
</dbReference>
<dbReference type="PANTHER" id="PTHR31929">
    <property type="entry name" value="SAUR-LIKE AUXIN-RESPONSIVE PROTEIN FAMILY-RELATED"/>
    <property type="match status" value="1"/>
</dbReference>
<dbReference type="Pfam" id="PF02519">
    <property type="entry name" value="Auxin_inducible"/>
    <property type="match status" value="1"/>
</dbReference>
<protein>
    <recommendedName>
        <fullName>Auxin-induced protein 10A5</fullName>
    </recommendedName>
</protein>
<proteinExistence type="evidence at transcript level"/>